<comment type="function">
    <text evidence="1">Catalyzes the methylthiolation of N6-(dimethylallyl)adenosine (i(6)A), leading to the formation of 2-methylthio-N6-(dimethylallyl)adenosine (ms(2)i(6)A) at position 37 in tRNAs that read codons beginning with uridine.</text>
</comment>
<comment type="catalytic activity">
    <reaction evidence="1">
        <text>N(6)-dimethylallyladenosine(37) in tRNA + (sulfur carrier)-SH + AH2 + 2 S-adenosyl-L-methionine = 2-methylsulfanyl-N(6)-dimethylallyladenosine(37) in tRNA + (sulfur carrier)-H + 5'-deoxyadenosine + L-methionine + A + S-adenosyl-L-homocysteine + 2 H(+)</text>
        <dbReference type="Rhea" id="RHEA:37067"/>
        <dbReference type="Rhea" id="RHEA-COMP:10375"/>
        <dbReference type="Rhea" id="RHEA-COMP:10376"/>
        <dbReference type="Rhea" id="RHEA-COMP:14737"/>
        <dbReference type="Rhea" id="RHEA-COMP:14739"/>
        <dbReference type="ChEBI" id="CHEBI:13193"/>
        <dbReference type="ChEBI" id="CHEBI:15378"/>
        <dbReference type="ChEBI" id="CHEBI:17319"/>
        <dbReference type="ChEBI" id="CHEBI:17499"/>
        <dbReference type="ChEBI" id="CHEBI:29917"/>
        <dbReference type="ChEBI" id="CHEBI:57844"/>
        <dbReference type="ChEBI" id="CHEBI:57856"/>
        <dbReference type="ChEBI" id="CHEBI:59789"/>
        <dbReference type="ChEBI" id="CHEBI:64428"/>
        <dbReference type="ChEBI" id="CHEBI:74415"/>
        <dbReference type="ChEBI" id="CHEBI:74417"/>
        <dbReference type="EC" id="2.8.4.3"/>
    </reaction>
</comment>
<comment type="cofactor">
    <cofactor evidence="1">
        <name>[4Fe-4S] cluster</name>
        <dbReference type="ChEBI" id="CHEBI:49883"/>
    </cofactor>
    <text evidence="1">Binds 2 [4Fe-4S] clusters. One cluster is coordinated with 3 cysteines and an exchangeable S-adenosyl-L-methionine.</text>
</comment>
<comment type="subunit">
    <text evidence="1">Monomer.</text>
</comment>
<comment type="subcellular location">
    <subcellularLocation>
        <location evidence="1">Cytoplasm</location>
    </subcellularLocation>
</comment>
<comment type="similarity">
    <text evidence="1">Belongs to the methylthiotransferase family. MiaB subfamily.</text>
</comment>
<accession>A8GY24</accession>
<reference key="1">
    <citation type="submission" date="2007-09" db="EMBL/GenBank/DDBJ databases">
        <title>Complete genome sequencing of Rickettsia bellii.</title>
        <authorList>
            <person name="Madan A."/>
            <person name="Lee H."/>
            <person name="Madan A."/>
            <person name="Yoon J.-G."/>
            <person name="Ryu G.-Y."/>
            <person name="Dasch G."/>
            <person name="Ereemeva M."/>
        </authorList>
    </citation>
    <scope>NUCLEOTIDE SEQUENCE [LARGE SCALE GENOMIC DNA]</scope>
    <source>
        <strain>OSU 85-389</strain>
    </source>
</reference>
<evidence type="ECO:0000255" key="1">
    <source>
        <dbReference type="HAMAP-Rule" id="MF_01864"/>
    </source>
</evidence>
<evidence type="ECO:0000255" key="2">
    <source>
        <dbReference type="PROSITE-ProRule" id="PRU01266"/>
    </source>
</evidence>
<feature type="chain" id="PRO_0000374502" description="tRNA-2-methylthio-N(6)-dimethylallyladenosine synthase">
    <location>
        <begin position="1"/>
        <end position="446"/>
    </location>
</feature>
<feature type="domain" description="MTTase N-terminal" evidence="1">
    <location>
        <begin position="3"/>
        <end position="124"/>
    </location>
</feature>
<feature type="domain" description="Radical SAM core" evidence="2">
    <location>
        <begin position="148"/>
        <end position="380"/>
    </location>
</feature>
<feature type="domain" description="TRAM" evidence="1">
    <location>
        <begin position="383"/>
        <end position="446"/>
    </location>
</feature>
<feature type="binding site" evidence="1">
    <location>
        <position position="12"/>
    </location>
    <ligand>
        <name>[4Fe-4S] cluster</name>
        <dbReference type="ChEBI" id="CHEBI:49883"/>
        <label>1</label>
    </ligand>
</feature>
<feature type="binding site" evidence="1">
    <location>
        <position position="48"/>
    </location>
    <ligand>
        <name>[4Fe-4S] cluster</name>
        <dbReference type="ChEBI" id="CHEBI:49883"/>
        <label>1</label>
    </ligand>
</feature>
<feature type="binding site" evidence="1">
    <location>
        <position position="87"/>
    </location>
    <ligand>
        <name>[4Fe-4S] cluster</name>
        <dbReference type="ChEBI" id="CHEBI:49883"/>
        <label>1</label>
    </ligand>
</feature>
<feature type="binding site" evidence="1">
    <location>
        <position position="162"/>
    </location>
    <ligand>
        <name>[4Fe-4S] cluster</name>
        <dbReference type="ChEBI" id="CHEBI:49883"/>
        <label>2</label>
        <note>4Fe-4S-S-AdoMet</note>
    </ligand>
</feature>
<feature type="binding site" evidence="1">
    <location>
        <position position="166"/>
    </location>
    <ligand>
        <name>[4Fe-4S] cluster</name>
        <dbReference type="ChEBI" id="CHEBI:49883"/>
        <label>2</label>
        <note>4Fe-4S-S-AdoMet</note>
    </ligand>
</feature>
<feature type="binding site" evidence="1">
    <location>
        <position position="169"/>
    </location>
    <ligand>
        <name>[4Fe-4S] cluster</name>
        <dbReference type="ChEBI" id="CHEBI:49883"/>
        <label>2</label>
        <note>4Fe-4S-S-AdoMet</note>
    </ligand>
</feature>
<organism>
    <name type="scientific">Rickettsia bellii (strain OSU 85-389)</name>
    <dbReference type="NCBI Taxonomy" id="391896"/>
    <lineage>
        <taxon>Bacteria</taxon>
        <taxon>Pseudomonadati</taxon>
        <taxon>Pseudomonadota</taxon>
        <taxon>Alphaproteobacteria</taxon>
        <taxon>Rickettsiales</taxon>
        <taxon>Rickettsiaceae</taxon>
        <taxon>Rickettsieae</taxon>
        <taxon>Rickettsia</taxon>
        <taxon>belli group</taxon>
    </lineage>
</organism>
<keyword id="KW-0004">4Fe-4S</keyword>
<keyword id="KW-0963">Cytoplasm</keyword>
<keyword id="KW-0408">Iron</keyword>
<keyword id="KW-0411">Iron-sulfur</keyword>
<keyword id="KW-0479">Metal-binding</keyword>
<keyword id="KW-0949">S-adenosyl-L-methionine</keyword>
<keyword id="KW-0808">Transferase</keyword>
<keyword id="KW-0819">tRNA processing</keyword>
<proteinExistence type="inferred from homology"/>
<name>MIAB_RICB8</name>
<dbReference type="EC" id="2.8.4.3" evidence="1"/>
<dbReference type="EMBL" id="CP000849">
    <property type="protein sequence ID" value="ABV79774.1"/>
    <property type="molecule type" value="Genomic_DNA"/>
</dbReference>
<dbReference type="RefSeq" id="WP_012152246.1">
    <property type="nucleotide sequence ID" value="NC_009883.1"/>
</dbReference>
<dbReference type="SMR" id="A8GY24"/>
<dbReference type="KEGG" id="rbo:A1I_07380"/>
<dbReference type="HOGENOM" id="CLU_018697_2_0_5"/>
<dbReference type="GO" id="GO:0005829">
    <property type="term" value="C:cytosol"/>
    <property type="evidence" value="ECO:0007669"/>
    <property type="project" value="TreeGrafter"/>
</dbReference>
<dbReference type="GO" id="GO:0051539">
    <property type="term" value="F:4 iron, 4 sulfur cluster binding"/>
    <property type="evidence" value="ECO:0007669"/>
    <property type="project" value="UniProtKB-UniRule"/>
</dbReference>
<dbReference type="GO" id="GO:0046872">
    <property type="term" value="F:metal ion binding"/>
    <property type="evidence" value="ECO:0007669"/>
    <property type="project" value="UniProtKB-KW"/>
</dbReference>
<dbReference type="GO" id="GO:0035597">
    <property type="term" value="F:N6-isopentenyladenosine methylthiotransferase activity"/>
    <property type="evidence" value="ECO:0007669"/>
    <property type="project" value="TreeGrafter"/>
</dbReference>
<dbReference type="CDD" id="cd01335">
    <property type="entry name" value="Radical_SAM"/>
    <property type="match status" value="1"/>
</dbReference>
<dbReference type="FunFam" id="3.40.50.12160:FF:000001">
    <property type="entry name" value="tRNA-2-methylthio-N(6)-dimethylallyladenosine synthase"/>
    <property type="match status" value="1"/>
</dbReference>
<dbReference type="FunFam" id="3.80.30.20:FF:000001">
    <property type="entry name" value="tRNA-2-methylthio-N(6)-dimethylallyladenosine synthase 2"/>
    <property type="match status" value="1"/>
</dbReference>
<dbReference type="Gene3D" id="3.40.50.12160">
    <property type="entry name" value="Methylthiotransferase, N-terminal domain"/>
    <property type="match status" value="1"/>
</dbReference>
<dbReference type="Gene3D" id="3.80.30.20">
    <property type="entry name" value="tm_1862 like domain"/>
    <property type="match status" value="1"/>
</dbReference>
<dbReference type="HAMAP" id="MF_01864">
    <property type="entry name" value="tRNA_metthiotr_MiaB"/>
    <property type="match status" value="1"/>
</dbReference>
<dbReference type="InterPro" id="IPR006638">
    <property type="entry name" value="Elp3/MiaA/NifB-like_rSAM"/>
</dbReference>
<dbReference type="InterPro" id="IPR005839">
    <property type="entry name" value="Methylthiotransferase"/>
</dbReference>
<dbReference type="InterPro" id="IPR020612">
    <property type="entry name" value="Methylthiotransferase_CS"/>
</dbReference>
<dbReference type="InterPro" id="IPR013848">
    <property type="entry name" value="Methylthiotransferase_N"/>
</dbReference>
<dbReference type="InterPro" id="IPR038135">
    <property type="entry name" value="Methylthiotransferase_N_sf"/>
</dbReference>
<dbReference type="InterPro" id="IPR006463">
    <property type="entry name" value="MiaB_methiolase"/>
</dbReference>
<dbReference type="InterPro" id="IPR007197">
    <property type="entry name" value="rSAM"/>
</dbReference>
<dbReference type="InterPro" id="IPR023404">
    <property type="entry name" value="rSAM_horseshoe"/>
</dbReference>
<dbReference type="InterPro" id="IPR002792">
    <property type="entry name" value="TRAM_dom"/>
</dbReference>
<dbReference type="NCBIfam" id="TIGR01574">
    <property type="entry name" value="miaB-methiolase"/>
    <property type="match status" value="1"/>
</dbReference>
<dbReference type="NCBIfam" id="TIGR00089">
    <property type="entry name" value="MiaB/RimO family radical SAM methylthiotransferase"/>
    <property type="match status" value="1"/>
</dbReference>
<dbReference type="PANTHER" id="PTHR43020">
    <property type="entry name" value="CDK5 REGULATORY SUBUNIT-ASSOCIATED PROTEIN 1"/>
    <property type="match status" value="1"/>
</dbReference>
<dbReference type="PANTHER" id="PTHR43020:SF2">
    <property type="entry name" value="MITOCHONDRIAL TRNA METHYLTHIOTRANSFERASE CDK5RAP1"/>
    <property type="match status" value="1"/>
</dbReference>
<dbReference type="Pfam" id="PF04055">
    <property type="entry name" value="Radical_SAM"/>
    <property type="match status" value="1"/>
</dbReference>
<dbReference type="Pfam" id="PF01938">
    <property type="entry name" value="TRAM"/>
    <property type="match status" value="1"/>
</dbReference>
<dbReference type="Pfam" id="PF00919">
    <property type="entry name" value="UPF0004"/>
    <property type="match status" value="1"/>
</dbReference>
<dbReference type="SFLD" id="SFLDF00273">
    <property type="entry name" value="(dimethylallyl)adenosine_tRNA"/>
    <property type="match status" value="1"/>
</dbReference>
<dbReference type="SFLD" id="SFLDG01082">
    <property type="entry name" value="B12-binding_domain_containing"/>
    <property type="match status" value="1"/>
</dbReference>
<dbReference type="SFLD" id="SFLDS00029">
    <property type="entry name" value="Radical_SAM"/>
    <property type="match status" value="1"/>
</dbReference>
<dbReference type="SMART" id="SM00729">
    <property type="entry name" value="Elp3"/>
    <property type="match status" value="1"/>
</dbReference>
<dbReference type="SUPFAM" id="SSF102114">
    <property type="entry name" value="Radical SAM enzymes"/>
    <property type="match status" value="1"/>
</dbReference>
<dbReference type="PROSITE" id="PS51449">
    <property type="entry name" value="MTTASE_N"/>
    <property type="match status" value="1"/>
</dbReference>
<dbReference type="PROSITE" id="PS01278">
    <property type="entry name" value="MTTASE_RADICAL"/>
    <property type="match status" value="1"/>
</dbReference>
<dbReference type="PROSITE" id="PS51918">
    <property type="entry name" value="RADICAL_SAM"/>
    <property type="match status" value="1"/>
</dbReference>
<dbReference type="PROSITE" id="PS50926">
    <property type="entry name" value="TRAM"/>
    <property type="match status" value="1"/>
</dbReference>
<protein>
    <recommendedName>
        <fullName evidence="1">tRNA-2-methylthio-N(6)-dimethylallyladenosine synthase</fullName>
        <ecNumber evidence="1">2.8.4.3</ecNumber>
    </recommendedName>
    <alternativeName>
        <fullName evidence="1">(Dimethylallyl)adenosine tRNA methylthiotransferase MiaB</fullName>
    </alternativeName>
    <alternativeName>
        <fullName evidence="1">tRNA-i(6)A37 methylthiotransferase</fullName>
    </alternativeName>
</protein>
<gene>
    <name evidence="1" type="primary">miaB</name>
    <name type="ordered locus">A1I_07380</name>
</gene>
<sequence length="446" mass="50700">MSKKLYIKTYGCQMNVYDSVKMQDLLYPYGYEPTENIEEADVIILNTCHIREKAAEKTYSELGRIKKLQDARKKQGLNSAIIVVAGCVAQAEGEEIFTRTPYVDIVVGPQSYYNLPELISKVVRHEKHLIDLDFVEEAKFDQLPEQLYPQGASSFISVQEGCDKFCTFCVVPYTRGAEFSRNVEQVYREALKVVSSGAKEIMLLGQNVNAYHGKTSDDKVFTLADLIRHLVKIPNLERLRYTTSHPIDMTDDLISLHGLEPKLMPFLHLPVQSGSNKTLKAMNRKHDRDYYFDIIDRLRKARADIVLSSDFIVGFPGETDEDFADTLDLVRKVKYGQCYSFKYSPRPGTPGATRTDQVPEHIKSERLTILQKELAAQQLAFNESCIGSTMKVLFDRDGKFDDQIIGKTPYMQSVYIKNPNKDLLGKIIEVKITKAALNSLSGEIYR</sequence>